<reference key="1">
    <citation type="journal article" date="2009" name="J. Bacteriol.">
        <title>Complete genome sequence of Haemophilus parasuis SH0165.</title>
        <authorList>
            <person name="Yue M."/>
            <person name="Yang F."/>
            <person name="Yang J."/>
            <person name="Bei W."/>
            <person name="Cai X."/>
            <person name="Chen L."/>
            <person name="Dong J."/>
            <person name="Zhou R."/>
            <person name="Jin M."/>
            <person name="Jin Q."/>
            <person name="Chen H."/>
        </authorList>
    </citation>
    <scope>NUCLEOTIDE SEQUENCE [LARGE SCALE GENOMIC DNA]</scope>
    <source>
        <strain>SH0165</strain>
    </source>
</reference>
<evidence type="ECO:0000255" key="1">
    <source>
        <dbReference type="HAMAP-Rule" id="MF_00484"/>
    </source>
</evidence>
<accession>B8F3S8</accession>
<comment type="function">
    <text evidence="1">Synthesizes alpha-1,4-glucan chains using ADP-glucose.</text>
</comment>
<comment type="catalytic activity">
    <reaction evidence="1">
        <text>[(1-&gt;4)-alpha-D-glucosyl](n) + ADP-alpha-D-glucose = [(1-&gt;4)-alpha-D-glucosyl](n+1) + ADP + H(+)</text>
        <dbReference type="Rhea" id="RHEA:18189"/>
        <dbReference type="Rhea" id="RHEA-COMP:9584"/>
        <dbReference type="Rhea" id="RHEA-COMP:9587"/>
        <dbReference type="ChEBI" id="CHEBI:15378"/>
        <dbReference type="ChEBI" id="CHEBI:15444"/>
        <dbReference type="ChEBI" id="CHEBI:57498"/>
        <dbReference type="ChEBI" id="CHEBI:456216"/>
        <dbReference type="EC" id="2.4.1.21"/>
    </reaction>
</comment>
<comment type="pathway">
    <text evidence="1">Glycan biosynthesis; glycogen biosynthesis.</text>
</comment>
<comment type="similarity">
    <text evidence="1">Belongs to the glycosyltransferase 1 family. Bacterial/plant glycogen synthase subfamily.</text>
</comment>
<sequence>MKILHICSEMYPLIKTGGLADVMGALPYAQQSAGNDVRVLIPYYPQVASKLGETVEVATVGTFAGVVTVRFAYLNGLGVYVIDAPHLFDRRLPYYDDNYQDYTDNYKRFALLGYLGAQLASGLDHWWGRSDVLHAHDWQAGLACAYLKSWNSPVKSVFTIHNIAYPGRFQAYHLAELALPWEFFHVNGLEFYGEISYLKAGLFYADRVTAVSPTYAREITEQIAGAGMHGLLQQRLAEGALRGILNGVDDTVWNPETDTNIVANYRPNYMQGKGKNKSELQRYFGLPEDKDALLFVMVTRLTEQKGADFLLARIDQIMQHNVQLVVLGSGSPDLEWALRDAQSRYPHKIGLKIGYDEALSHQIIAGGDVILVPSRFEPCGLTQLYGLKYGTLPLVRRTGGLADTVNDAHKESIENRTATGFVFSYPDADNFYDAVLRAINLWGKNKLWSSVRQNALAQDFGWAKVAQQYQELYYEIV</sequence>
<keyword id="KW-0320">Glycogen biosynthesis</keyword>
<keyword id="KW-0328">Glycosyltransferase</keyword>
<keyword id="KW-1185">Reference proteome</keyword>
<keyword id="KW-0808">Transferase</keyword>
<name>GLGA_GLAP5</name>
<feature type="chain" id="PRO_1000135652" description="Glycogen synthase">
    <location>
        <begin position="1"/>
        <end position="477"/>
    </location>
</feature>
<feature type="binding site" evidence="1">
    <location>
        <position position="15"/>
    </location>
    <ligand>
        <name>ADP-alpha-D-glucose</name>
        <dbReference type="ChEBI" id="CHEBI:57498"/>
    </ligand>
</feature>
<dbReference type="EC" id="2.4.1.21" evidence="1"/>
<dbReference type="EMBL" id="CP001321">
    <property type="protein sequence ID" value="ACL31980.1"/>
    <property type="molecule type" value="Genomic_DNA"/>
</dbReference>
<dbReference type="RefSeq" id="WP_010786842.1">
    <property type="nucleotide sequence ID" value="NC_011852.1"/>
</dbReference>
<dbReference type="SMR" id="B8F3S8"/>
<dbReference type="STRING" id="557723.HAPS_0293"/>
<dbReference type="CAZy" id="GT5">
    <property type="family name" value="Glycosyltransferase Family 5"/>
</dbReference>
<dbReference type="GeneID" id="66618728"/>
<dbReference type="KEGG" id="hap:HAPS_0293"/>
<dbReference type="PATRIC" id="fig|557723.8.peg.300"/>
<dbReference type="HOGENOM" id="CLU_009583_18_4_6"/>
<dbReference type="UniPathway" id="UPA00164"/>
<dbReference type="Proteomes" id="UP000006743">
    <property type="component" value="Chromosome"/>
</dbReference>
<dbReference type="GO" id="GO:0005829">
    <property type="term" value="C:cytosol"/>
    <property type="evidence" value="ECO:0007669"/>
    <property type="project" value="TreeGrafter"/>
</dbReference>
<dbReference type="GO" id="GO:0009011">
    <property type="term" value="F:alpha-1,4-glucan glucosyltransferase (ADP-glucose donor) activity"/>
    <property type="evidence" value="ECO:0007669"/>
    <property type="project" value="UniProtKB-UniRule"/>
</dbReference>
<dbReference type="GO" id="GO:0004373">
    <property type="term" value="F:alpha-1,4-glucan glucosyltransferase (UDP-glucose donor) activity"/>
    <property type="evidence" value="ECO:0007669"/>
    <property type="project" value="InterPro"/>
</dbReference>
<dbReference type="GO" id="GO:0005978">
    <property type="term" value="P:glycogen biosynthetic process"/>
    <property type="evidence" value="ECO:0007669"/>
    <property type="project" value="UniProtKB-UniRule"/>
</dbReference>
<dbReference type="CDD" id="cd03791">
    <property type="entry name" value="GT5_Glycogen_synthase_DULL1-like"/>
    <property type="match status" value="1"/>
</dbReference>
<dbReference type="FunFam" id="3.40.50.2000:FF:000011">
    <property type="entry name" value="Glycogen synthase"/>
    <property type="match status" value="1"/>
</dbReference>
<dbReference type="Gene3D" id="3.40.50.2000">
    <property type="entry name" value="Glycogen Phosphorylase B"/>
    <property type="match status" value="2"/>
</dbReference>
<dbReference type="HAMAP" id="MF_00484">
    <property type="entry name" value="Glycogen_synth"/>
    <property type="match status" value="1"/>
</dbReference>
<dbReference type="InterPro" id="IPR001296">
    <property type="entry name" value="Glyco_trans_1"/>
</dbReference>
<dbReference type="InterPro" id="IPR011835">
    <property type="entry name" value="GS/SS"/>
</dbReference>
<dbReference type="InterPro" id="IPR013534">
    <property type="entry name" value="Starch_synth_cat_dom"/>
</dbReference>
<dbReference type="NCBIfam" id="TIGR02095">
    <property type="entry name" value="glgA"/>
    <property type="match status" value="1"/>
</dbReference>
<dbReference type="NCBIfam" id="NF001899">
    <property type="entry name" value="PRK00654.1-2"/>
    <property type="match status" value="1"/>
</dbReference>
<dbReference type="PANTHER" id="PTHR45825:SF11">
    <property type="entry name" value="ALPHA AMYLASE DOMAIN-CONTAINING PROTEIN"/>
    <property type="match status" value="1"/>
</dbReference>
<dbReference type="PANTHER" id="PTHR45825">
    <property type="entry name" value="GRANULE-BOUND STARCH SYNTHASE 1, CHLOROPLASTIC/AMYLOPLASTIC"/>
    <property type="match status" value="1"/>
</dbReference>
<dbReference type="Pfam" id="PF08323">
    <property type="entry name" value="Glyco_transf_5"/>
    <property type="match status" value="1"/>
</dbReference>
<dbReference type="Pfam" id="PF00534">
    <property type="entry name" value="Glycos_transf_1"/>
    <property type="match status" value="1"/>
</dbReference>
<dbReference type="SUPFAM" id="SSF53756">
    <property type="entry name" value="UDP-Glycosyltransferase/glycogen phosphorylase"/>
    <property type="match status" value="1"/>
</dbReference>
<organism>
    <name type="scientific">Glaesserella parasuis serovar 5 (strain SH0165)</name>
    <name type="common">Haemophilus parasuis</name>
    <dbReference type="NCBI Taxonomy" id="557723"/>
    <lineage>
        <taxon>Bacteria</taxon>
        <taxon>Pseudomonadati</taxon>
        <taxon>Pseudomonadota</taxon>
        <taxon>Gammaproteobacteria</taxon>
        <taxon>Pasteurellales</taxon>
        <taxon>Pasteurellaceae</taxon>
        <taxon>Glaesserella</taxon>
    </lineage>
</organism>
<gene>
    <name evidence="1" type="primary">glgA</name>
    <name type="ordered locus">HAPS_0293</name>
</gene>
<proteinExistence type="inferred from homology"/>
<protein>
    <recommendedName>
        <fullName evidence="1">Glycogen synthase</fullName>
        <ecNumber evidence="1">2.4.1.21</ecNumber>
    </recommendedName>
    <alternativeName>
        <fullName evidence="1">Starch [bacterial glycogen] synthase</fullName>
    </alternativeName>
</protein>